<comment type="function">
    <text evidence="1">Is required not only for elongation of protein synthesis but also for the initiation of all mRNA translation through initiator tRNA(fMet) aminoacylation.</text>
</comment>
<comment type="catalytic activity">
    <reaction evidence="1">
        <text>tRNA(Met) + L-methionine + ATP = L-methionyl-tRNA(Met) + AMP + diphosphate</text>
        <dbReference type="Rhea" id="RHEA:13481"/>
        <dbReference type="Rhea" id="RHEA-COMP:9667"/>
        <dbReference type="Rhea" id="RHEA-COMP:9698"/>
        <dbReference type="ChEBI" id="CHEBI:30616"/>
        <dbReference type="ChEBI" id="CHEBI:33019"/>
        <dbReference type="ChEBI" id="CHEBI:57844"/>
        <dbReference type="ChEBI" id="CHEBI:78442"/>
        <dbReference type="ChEBI" id="CHEBI:78530"/>
        <dbReference type="ChEBI" id="CHEBI:456215"/>
        <dbReference type="EC" id="6.1.1.10"/>
    </reaction>
</comment>
<comment type="cofactor">
    <cofactor evidence="1">
        <name>Zn(2+)</name>
        <dbReference type="ChEBI" id="CHEBI:29105"/>
    </cofactor>
    <text evidence="1">Binds 1 zinc ion per subunit.</text>
</comment>
<comment type="subunit">
    <text evidence="1">Monomer.</text>
</comment>
<comment type="subcellular location">
    <subcellularLocation>
        <location evidence="1">Cytoplasm</location>
    </subcellularLocation>
</comment>
<comment type="similarity">
    <text evidence="1">Belongs to the class-I aminoacyl-tRNA synthetase family. MetG type 1 subfamily.</text>
</comment>
<keyword id="KW-0030">Aminoacyl-tRNA synthetase</keyword>
<keyword id="KW-0067">ATP-binding</keyword>
<keyword id="KW-0963">Cytoplasm</keyword>
<keyword id="KW-0436">Ligase</keyword>
<keyword id="KW-0479">Metal-binding</keyword>
<keyword id="KW-0547">Nucleotide-binding</keyword>
<keyword id="KW-0648">Protein biosynthesis</keyword>
<keyword id="KW-1185">Reference proteome</keyword>
<keyword id="KW-0862">Zinc</keyword>
<gene>
    <name evidence="1" type="primary">metG</name>
    <name type="ordered locus">COSY_0525</name>
</gene>
<protein>
    <recommendedName>
        <fullName evidence="1">Methionine--tRNA ligase</fullName>
        <ecNumber evidence="1">6.1.1.10</ecNumber>
    </recommendedName>
    <alternativeName>
        <fullName evidence="1">Methionyl-tRNA synthetase</fullName>
        <shortName evidence="1">MetRS</shortName>
    </alternativeName>
</protein>
<sequence length="545" mass="63365">MTSRKILVTSALPYANGEIHLGHLLEYIQTDIWVRFQKMMGNECHYVCADDAHGTAIMLKADELDITPEVLIKNMSNKHQIDFQSFSIDFSQYHSTHSQENKDISTNIYNKLNVAGFIKTRVISQAFDPLKQMFLADRFIKGDCPKCGSNEQYGDNCEVCGATYSSIELKNAKSVISGVTPITKDSEHYFFDLPQFEVQLKEWTKAGHLQDAISNKLSEWFKEGLQQWDISRDAPYFGFQIPAVEGKYFYVWLDAPIGYMASFKKLCDEQNIDFNEYFNKDSNTELYHFIGKDIIYFHALFWPAMLIGSNYRTPSAIFAHGFLTINGQKMSKSRGTFIQARTYLNYLNPEYLRYYYAYKLSSKIDDIDLNLIDFKQRINSDLVGKVVNIASRSAGFIVKKFNKTLSSYTIESKFYQEFFDCGDIIAKHYEARNYNQAMRVIIKLANKANQYIDKHKPWQLIKKPNQQTQVHDVTSLAINLFRVLMTYLKPVLPIMAKQVEKFLNIDELHWQDLKYPLIKHQINTFKPLMLRIEDDQIERIIEASK</sequence>
<proteinExistence type="inferred from homology"/>
<organism>
    <name type="scientific">Vesicomyosocius okutanii subsp. Calyptogena okutanii (strain HA)</name>
    <dbReference type="NCBI Taxonomy" id="412965"/>
    <lineage>
        <taxon>Bacteria</taxon>
        <taxon>Pseudomonadati</taxon>
        <taxon>Pseudomonadota</taxon>
        <taxon>Gammaproteobacteria</taxon>
        <taxon>Candidatus Pseudothioglobaceae</taxon>
        <taxon>Candidatus Vesicomyosocius</taxon>
    </lineage>
</organism>
<accession>A5CWL9</accession>
<name>SYM_VESOH</name>
<reference key="1">
    <citation type="journal article" date="2007" name="Curr. Biol.">
        <title>Reduced genome of the thioautotrophic intracellular symbiont in a deep-sea clam, Calyptogena okutanii.</title>
        <authorList>
            <person name="Kuwahara H."/>
            <person name="Yoshida T."/>
            <person name="Takaki Y."/>
            <person name="Shimamura S."/>
            <person name="Nishi S."/>
            <person name="Harada M."/>
            <person name="Matsuyama K."/>
            <person name="Takishita K."/>
            <person name="Kawato M."/>
            <person name="Uematsu K."/>
            <person name="Fujiwara Y."/>
            <person name="Sato T."/>
            <person name="Kato C."/>
            <person name="Kitagawa M."/>
            <person name="Kato I."/>
            <person name="Maruyama T."/>
        </authorList>
    </citation>
    <scope>NUCLEOTIDE SEQUENCE [LARGE SCALE GENOMIC DNA]</scope>
    <source>
        <strain>HA</strain>
    </source>
</reference>
<dbReference type="EC" id="6.1.1.10" evidence="1"/>
<dbReference type="EMBL" id="AP009247">
    <property type="protein sequence ID" value="BAF61643.1"/>
    <property type="molecule type" value="Genomic_DNA"/>
</dbReference>
<dbReference type="RefSeq" id="WP_011929913.1">
    <property type="nucleotide sequence ID" value="NC_009465.1"/>
</dbReference>
<dbReference type="SMR" id="A5CWL9"/>
<dbReference type="STRING" id="412965.COSY_0525"/>
<dbReference type="KEGG" id="vok:COSY_0525"/>
<dbReference type="eggNOG" id="COG0143">
    <property type="taxonomic scope" value="Bacteria"/>
</dbReference>
<dbReference type="HOGENOM" id="CLU_009710_7_0_6"/>
<dbReference type="OrthoDB" id="9810191at2"/>
<dbReference type="Proteomes" id="UP000000247">
    <property type="component" value="Chromosome"/>
</dbReference>
<dbReference type="GO" id="GO:0005829">
    <property type="term" value="C:cytosol"/>
    <property type="evidence" value="ECO:0007669"/>
    <property type="project" value="TreeGrafter"/>
</dbReference>
<dbReference type="GO" id="GO:0005524">
    <property type="term" value="F:ATP binding"/>
    <property type="evidence" value="ECO:0007669"/>
    <property type="project" value="UniProtKB-UniRule"/>
</dbReference>
<dbReference type="GO" id="GO:0046872">
    <property type="term" value="F:metal ion binding"/>
    <property type="evidence" value="ECO:0007669"/>
    <property type="project" value="UniProtKB-KW"/>
</dbReference>
<dbReference type="GO" id="GO:0004825">
    <property type="term" value="F:methionine-tRNA ligase activity"/>
    <property type="evidence" value="ECO:0007669"/>
    <property type="project" value="UniProtKB-UniRule"/>
</dbReference>
<dbReference type="GO" id="GO:0006431">
    <property type="term" value="P:methionyl-tRNA aminoacylation"/>
    <property type="evidence" value="ECO:0007669"/>
    <property type="project" value="UniProtKB-UniRule"/>
</dbReference>
<dbReference type="CDD" id="cd07957">
    <property type="entry name" value="Anticodon_Ia_Met"/>
    <property type="match status" value="1"/>
</dbReference>
<dbReference type="CDD" id="cd00814">
    <property type="entry name" value="MetRS_core"/>
    <property type="match status" value="1"/>
</dbReference>
<dbReference type="FunFam" id="1.10.730.10:FF:000005">
    <property type="entry name" value="Methionine--tRNA ligase"/>
    <property type="match status" value="1"/>
</dbReference>
<dbReference type="FunFam" id="2.20.28.20:FF:000001">
    <property type="entry name" value="Methionine--tRNA ligase"/>
    <property type="match status" value="1"/>
</dbReference>
<dbReference type="Gene3D" id="3.40.50.620">
    <property type="entry name" value="HUPs"/>
    <property type="match status" value="1"/>
</dbReference>
<dbReference type="Gene3D" id="1.10.730.10">
    <property type="entry name" value="Isoleucyl-tRNA Synthetase, Domain 1"/>
    <property type="match status" value="1"/>
</dbReference>
<dbReference type="Gene3D" id="2.20.28.20">
    <property type="entry name" value="Methionyl-tRNA synthetase, Zn-domain"/>
    <property type="match status" value="1"/>
</dbReference>
<dbReference type="HAMAP" id="MF_00098">
    <property type="entry name" value="Met_tRNA_synth_type1"/>
    <property type="match status" value="1"/>
</dbReference>
<dbReference type="InterPro" id="IPR001412">
    <property type="entry name" value="aa-tRNA-synth_I_CS"/>
</dbReference>
<dbReference type="InterPro" id="IPR041872">
    <property type="entry name" value="Anticodon_Met"/>
</dbReference>
<dbReference type="InterPro" id="IPR023458">
    <property type="entry name" value="Met-tRNA_ligase_1"/>
</dbReference>
<dbReference type="InterPro" id="IPR014758">
    <property type="entry name" value="Met-tRNA_synth"/>
</dbReference>
<dbReference type="InterPro" id="IPR015413">
    <property type="entry name" value="Methionyl/Leucyl_tRNA_Synth"/>
</dbReference>
<dbReference type="InterPro" id="IPR033911">
    <property type="entry name" value="MetRS_core"/>
</dbReference>
<dbReference type="InterPro" id="IPR029038">
    <property type="entry name" value="MetRS_Zn"/>
</dbReference>
<dbReference type="InterPro" id="IPR014729">
    <property type="entry name" value="Rossmann-like_a/b/a_fold"/>
</dbReference>
<dbReference type="InterPro" id="IPR009080">
    <property type="entry name" value="tRNAsynth_Ia_anticodon-bd"/>
</dbReference>
<dbReference type="NCBIfam" id="TIGR00398">
    <property type="entry name" value="metG"/>
    <property type="match status" value="1"/>
</dbReference>
<dbReference type="NCBIfam" id="NF001100">
    <property type="entry name" value="PRK00133.1"/>
    <property type="match status" value="1"/>
</dbReference>
<dbReference type="PANTHER" id="PTHR45765">
    <property type="entry name" value="METHIONINE--TRNA LIGASE"/>
    <property type="match status" value="1"/>
</dbReference>
<dbReference type="PANTHER" id="PTHR45765:SF1">
    <property type="entry name" value="METHIONINE--TRNA LIGASE, CYTOPLASMIC"/>
    <property type="match status" value="1"/>
</dbReference>
<dbReference type="Pfam" id="PF19303">
    <property type="entry name" value="Anticodon_3"/>
    <property type="match status" value="1"/>
</dbReference>
<dbReference type="Pfam" id="PF09334">
    <property type="entry name" value="tRNA-synt_1g"/>
    <property type="match status" value="1"/>
</dbReference>
<dbReference type="PRINTS" id="PR01041">
    <property type="entry name" value="TRNASYNTHMET"/>
</dbReference>
<dbReference type="SUPFAM" id="SSF47323">
    <property type="entry name" value="Anticodon-binding domain of a subclass of class I aminoacyl-tRNA synthetases"/>
    <property type="match status" value="1"/>
</dbReference>
<dbReference type="SUPFAM" id="SSF57770">
    <property type="entry name" value="Methionyl-tRNA synthetase (MetRS), Zn-domain"/>
    <property type="match status" value="1"/>
</dbReference>
<dbReference type="SUPFAM" id="SSF52374">
    <property type="entry name" value="Nucleotidylyl transferase"/>
    <property type="match status" value="1"/>
</dbReference>
<dbReference type="PROSITE" id="PS00178">
    <property type="entry name" value="AA_TRNA_LIGASE_I"/>
    <property type="match status" value="1"/>
</dbReference>
<feature type="chain" id="PRO_0000331924" description="Methionine--tRNA ligase">
    <location>
        <begin position="1"/>
        <end position="545"/>
    </location>
</feature>
<feature type="short sequence motif" description="'HIGH' region">
    <location>
        <begin position="13"/>
        <end position="23"/>
    </location>
</feature>
<feature type="short sequence motif" description="'KMSKS' region">
    <location>
        <begin position="329"/>
        <end position="333"/>
    </location>
</feature>
<feature type="binding site" evidence="1">
    <location>
        <position position="144"/>
    </location>
    <ligand>
        <name>Zn(2+)</name>
        <dbReference type="ChEBI" id="CHEBI:29105"/>
    </ligand>
</feature>
<feature type="binding site" evidence="1">
    <location>
        <position position="147"/>
    </location>
    <ligand>
        <name>Zn(2+)</name>
        <dbReference type="ChEBI" id="CHEBI:29105"/>
    </ligand>
</feature>
<feature type="binding site" evidence="1">
    <location>
        <position position="157"/>
    </location>
    <ligand>
        <name>Zn(2+)</name>
        <dbReference type="ChEBI" id="CHEBI:29105"/>
    </ligand>
</feature>
<feature type="binding site" evidence="1">
    <location>
        <position position="160"/>
    </location>
    <ligand>
        <name>Zn(2+)</name>
        <dbReference type="ChEBI" id="CHEBI:29105"/>
    </ligand>
</feature>
<feature type="binding site" evidence="1">
    <location>
        <position position="332"/>
    </location>
    <ligand>
        <name>ATP</name>
        <dbReference type="ChEBI" id="CHEBI:30616"/>
    </ligand>
</feature>
<evidence type="ECO:0000255" key="1">
    <source>
        <dbReference type="HAMAP-Rule" id="MF_00098"/>
    </source>
</evidence>